<comment type="function">
    <text evidence="1 3">Required for accurate and efficient protein synthesis under certain stress conditions. May act as a fidelity factor of the translation reaction, by catalyzing a one-codon backward translocation of tRNAs on improperly translocated ribosomes. Back-translocation proceeds from a post-translocation (POST) complex to a pre-translocation (PRE) complex, thus giving elongation factor G a second chance to translocate the tRNAs correctly. Binds to ribosomes in a GTP-dependent manner.</text>
</comment>
<comment type="catalytic activity">
    <reaction evidence="1">
        <text>GTP + H2O = GDP + phosphate + H(+)</text>
        <dbReference type="Rhea" id="RHEA:19669"/>
        <dbReference type="ChEBI" id="CHEBI:15377"/>
        <dbReference type="ChEBI" id="CHEBI:15378"/>
        <dbReference type="ChEBI" id="CHEBI:37565"/>
        <dbReference type="ChEBI" id="CHEBI:43474"/>
        <dbReference type="ChEBI" id="CHEBI:58189"/>
        <dbReference type="EC" id="3.6.5.n1"/>
    </reaction>
</comment>
<comment type="subcellular location">
    <subcellularLocation>
        <location evidence="1">Cell membrane</location>
        <topology evidence="1">Peripheral membrane protein</topology>
        <orientation evidence="1">Cytoplasmic side</orientation>
    </subcellularLocation>
</comment>
<comment type="similarity">
    <text evidence="1">Belongs to the TRAFAC class translation factor GTPase superfamily. Classic translation factor GTPase family. LepA subfamily.</text>
</comment>
<name>LEPA_MYCTU</name>
<sequence length="653" mass="72396">MRTPCSQHRRDRPSAIGSQLPDADTLDTRQPPLQEIPISSFADKTFTAPAQIRNFCIIAHIDHGKSTLADRMLQLTGVVDERSMRAQYLDRMDIERERGITIKAQNVRLPWRVDKTDYVLHLIDTPGHVDFTYEVSRALEACEGAVLLVDAAQGIEAQTLANLYLALDRDLHIIPVLNKIDLPAADPDRYAAEMAHIIGCEPAEVLRVSGKTGEGVSDLLDEVVRQVPPPQGDAEAPTRAMIFDSVYDIYRGVVTYVRVVDGKISPRERIMMMSTGATHELLEVGIVSPEPKPCEGLGVGEVGYLITGVKDVRQSKVGDTVTSLSRARGAAAEALTGYREPKPMVYSGLYPVDGSDYPNLRDALDKLQLNDAALTYEPETSVALGFGFRCGFLGLLHMEITRERLEREFGLDLISTSPNVVYRVHKDDGTEIRVTNPSDWPEGKIRTVYEPVVKTTIIAPSEFIGTIMELCQSRRGELGGMDYLSPERVELRYTMPLGEIIFDFFDALKSRTRGYASLDYEEAGEQEAALVKVDILLQGEAVDAFSAIVHKDTAYAYGNKMTTKLKELIPRQQFEVPVQAAIGSKIIARENIRAIRKDVLSKCYGGDITRKRKLLEKQKEGKKRMKTIGRVEVPQEAFVAALSTDAAGDKGKK</sequence>
<evidence type="ECO:0000255" key="1">
    <source>
        <dbReference type="HAMAP-Rule" id="MF_00071"/>
    </source>
</evidence>
<evidence type="ECO:0000256" key="2">
    <source>
        <dbReference type="SAM" id="MobiDB-lite"/>
    </source>
</evidence>
<evidence type="ECO:0000269" key="3">
    <source>
    </source>
</evidence>
<gene>
    <name evidence="1" type="primary">lepA</name>
    <name type="ordered locus">Rv2404c</name>
    <name type="ORF">MTCY253.16</name>
</gene>
<organism>
    <name type="scientific">Mycobacterium tuberculosis (strain ATCC 25618 / H37Rv)</name>
    <dbReference type="NCBI Taxonomy" id="83332"/>
    <lineage>
        <taxon>Bacteria</taxon>
        <taxon>Bacillati</taxon>
        <taxon>Actinomycetota</taxon>
        <taxon>Actinomycetes</taxon>
        <taxon>Mycobacteriales</taxon>
        <taxon>Mycobacteriaceae</taxon>
        <taxon>Mycobacterium</taxon>
        <taxon>Mycobacterium tuberculosis complex</taxon>
    </lineage>
</organism>
<dbReference type="EC" id="3.6.5.n1" evidence="1"/>
<dbReference type="EMBL" id="AL123456">
    <property type="protein sequence ID" value="CCP45195.1"/>
    <property type="molecule type" value="Genomic_DNA"/>
</dbReference>
<dbReference type="PIR" id="G70683">
    <property type="entry name" value="G70683"/>
</dbReference>
<dbReference type="RefSeq" id="NP_216920.1">
    <property type="nucleotide sequence ID" value="NC_000962.3"/>
</dbReference>
<dbReference type="RefSeq" id="WP_003900516.1">
    <property type="nucleotide sequence ID" value="NZ_NVQJ01000054.1"/>
</dbReference>
<dbReference type="SMR" id="P9WK97"/>
<dbReference type="FunCoup" id="P9WK97">
    <property type="interactions" value="353"/>
</dbReference>
<dbReference type="STRING" id="83332.Rv2404c"/>
<dbReference type="PaxDb" id="83332-Rv2404c"/>
<dbReference type="DNASU" id="885475"/>
<dbReference type="GeneID" id="45426394"/>
<dbReference type="GeneID" id="885475"/>
<dbReference type="KEGG" id="mtu:Rv2404c"/>
<dbReference type="KEGG" id="mtv:RVBD_2404c"/>
<dbReference type="TubercuList" id="Rv2404c"/>
<dbReference type="eggNOG" id="COG0481">
    <property type="taxonomic scope" value="Bacteria"/>
</dbReference>
<dbReference type="InParanoid" id="P9WK97"/>
<dbReference type="OrthoDB" id="9801472at2"/>
<dbReference type="PhylomeDB" id="P9WK97"/>
<dbReference type="Proteomes" id="UP000001584">
    <property type="component" value="Chromosome"/>
</dbReference>
<dbReference type="GO" id="GO:0005829">
    <property type="term" value="C:cytosol"/>
    <property type="evidence" value="ECO:0007005"/>
    <property type="project" value="MTBBASE"/>
</dbReference>
<dbReference type="GO" id="GO:0009274">
    <property type="term" value="C:peptidoglycan-based cell wall"/>
    <property type="evidence" value="ECO:0007005"/>
    <property type="project" value="MTBBASE"/>
</dbReference>
<dbReference type="GO" id="GO:0005886">
    <property type="term" value="C:plasma membrane"/>
    <property type="evidence" value="ECO:0007669"/>
    <property type="project" value="UniProtKB-SubCell"/>
</dbReference>
<dbReference type="GO" id="GO:0005525">
    <property type="term" value="F:GTP binding"/>
    <property type="evidence" value="ECO:0007669"/>
    <property type="project" value="UniProtKB-UniRule"/>
</dbReference>
<dbReference type="GO" id="GO:0003924">
    <property type="term" value="F:GTPase activity"/>
    <property type="evidence" value="ECO:0007669"/>
    <property type="project" value="UniProtKB-UniRule"/>
</dbReference>
<dbReference type="GO" id="GO:0043022">
    <property type="term" value="F:ribosome binding"/>
    <property type="evidence" value="ECO:0000318"/>
    <property type="project" value="GO_Central"/>
</dbReference>
<dbReference type="GO" id="GO:0003746">
    <property type="term" value="F:translation elongation factor activity"/>
    <property type="evidence" value="ECO:0007669"/>
    <property type="project" value="UniProtKB-UniRule"/>
</dbReference>
<dbReference type="GO" id="GO:0045727">
    <property type="term" value="P:positive regulation of translation"/>
    <property type="evidence" value="ECO:0000318"/>
    <property type="project" value="GO_Central"/>
</dbReference>
<dbReference type="CDD" id="cd03699">
    <property type="entry name" value="EF4_II"/>
    <property type="match status" value="1"/>
</dbReference>
<dbReference type="CDD" id="cd16260">
    <property type="entry name" value="EF4_III"/>
    <property type="match status" value="1"/>
</dbReference>
<dbReference type="CDD" id="cd01890">
    <property type="entry name" value="LepA"/>
    <property type="match status" value="1"/>
</dbReference>
<dbReference type="CDD" id="cd03709">
    <property type="entry name" value="lepA_C"/>
    <property type="match status" value="1"/>
</dbReference>
<dbReference type="FunFam" id="3.30.70.240:FF:000011">
    <property type="entry name" value="Elongation factor 4"/>
    <property type="match status" value="1"/>
</dbReference>
<dbReference type="FunFam" id="3.40.50.300:FF:000078">
    <property type="entry name" value="Elongation factor 4"/>
    <property type="match status" value="1"/>
</dbReference>
<dbReference type="FunFam" id="2.40.30.10:FF:000015">
    <property type="entry name" value="Translation factor GUF1, mitochondrial"/>
    <property type="match status" value="1"/>
</dbReference>
<dbReference type="FunFam" id="3.30.70.2570:FF:000001">
    <property type="entry name" value="Translation factor GUF1, mitochondrial"/>
    <property type="match status" value="1"/>
</dbReference>
<dbReference type="FunFam" id="3.30.70.870:FF:000004">
    <property type="entry name" value="Translation factor GUF1, mitochondrial"/>
    <property type="match status" value="1"/>
</dbReference>
<dbReference type="Gene3D" id="3.30.70.240">
    <property type="match status" value="1"/>
</dbReference>
<dbReference type="Gene3D" id="3.30.70.2570">
    <property type="entry name" value="Elongation factor 4, C-terminal domain"/>
    <property type="match status" value="1"/>
</dbReference>
<dbReference type="Gene3D" id="3.30.70.870">
    <property type="entry name" value="Elongation Factor G (Translational Gtpase), domain 3"/>
    <property type="match status" value="1"/>
</dbReference>
<dbReference type="Gene3D" id="3.40.50.300">
    <property type="entry name" value="P-loop containing nucleotide triphosphate hydrolases"/>
    <property type="match status" value="1"/>
</dbReference>
<dbReference type="Gene3D" id="2.40.30.10">
    <property type="entry name" value="Translation factors"/>
    <property type="match status" value="1"/>
</dbReference>
<dbReference type="HAMAP" id="MF_00071">
    <property type="entry name" value="LepA"/>
    <property type="match status" value="1"/>
</dbReference>
<dbReference type="InterPro" id="IPR006297">
    <property type="entry name" value="EF-4"/>
</dbReference>
<dbReference type="InterPro" id="IPR035647">
    <property type="entry name" value="EFG_III/V"/>
</dbReference>
<dbReference type="InterPro" id="IPR000640">
    <property type="entry name" value="EFG_V-like"/>
</dbReference>
<dbReference type="InterPro" id="IPR004161">
    <property type="entry name" value="EFTu-like_2"/>
</dbReference>
<dbReference type="InterPro" id="IPR031157">
    <property type="entry name" value="G_TR_CS"/>
</dbReference>
<dbReference type="InterPro" id="IPR038363">
    <property type="entry name" value="LepA_C_sf"/>
</dbReference>
<dbReference type="InterPro" id="IPR013842">
    <property type="entry name" value="LepA_CTD"/>
</dbReference>
<dbReference type="InterPro" id="IPR035654">
    <property type="entry name" value="LepA_IV"/>
</dbReference>
<dbReference type="InterPro" id="IPR027417">
    <property type="entry name" value="P-loop_NTPase"/>
</dbReference>
<dbReference type="InterPro" id="IPR005225">
    <property type="entry name" value="Small_GTP-bd"/>
</dbReference>
<dbReference type="InterPro" id="IPR000795">
    <property type="entry name" value="T_Tr_GTP-bd_dom"/>
</dbReference>
<dbReference type="InterPro" id="IPR009000">
    <property type="entry name" value="Transl_B-barrel_sf"/>
</dbReference>
<dbReference type="NCBIfam" id="TIGR01393">
    <property type="entry name" value="lepA"/>
    <property type="match status" value="1"/>
</dbReference>
<dbReference type="NCBIfam" id="TIGR00231">
    <property type="entry name" value="small_GTP"/>
    <property type="match status" value="1"/>
</dbReference>
<dbReference type="PANTHER" id="PTHR43512:SF4">
    <property type="entry name" value="TRANSLATION FACTOR GUF1 HOMOLOG, CHLOROPLASTIC"/>
    <property type="match status" value="1"/>
</dbReference>
<dbReference type="PANTHER" id="PTHR43512">
    <property type="entry name" value="TRANSLATION FACTOR GUF1-RELATED"/>
    <property type="match status" value="1"/>
</dbReference>
<dbReference type="Pfam" id="PF00679">
    <property type="entry name" value="EFG_C"/>
    <property type="match status" value="1"/>
</dbReference>
<dbReference type="Pfam" id="PF00009">
    <property type="entry name" value="GTP_EFTU"/>
    <property type="match status" value="1"/>
</dbReference>
<dbReference type="Pfam" id="PF03144">
    <property type="entry name" value="GTP_EFTU_D2"/>
    <property type="match status" value="1"/>
</dbReference>
<dbReference type="Pfam" id="PF06421">
    <property type="entry name" value="LepA_C"/>
    <property type="match status" value="1"/>
</dbReference>
<dbReference type="PRINTS" id="PR00315">
    <property type="entry name" value="ELONGATNFCT"/>
</dbReference>
<dbReference type="SMART" id="SM00838">
    <property type="entry name" value="EFG_C"/>
    <property type="match status" value="1"/>
</dbReference>
<dbReference type="SUPFAM" id="SSF54980">
    <property type="entry name" value="EF-G C-terminal domain-like"/>
    <property type="match status" value="2"/>
</dbReference>
<dbReference type="SUPFAM" id="SSF52540">
    <property type="entry name" value="P-loop containing nucleoside triphosphate hydrolases"/>
    <property type="match status" value="1"/>
</dbReference>
<dbReference type="SUPFAM" id="SSF50447">
    <property type="entry name" value="Translation proteins"/>
    <property type="match status" value="1"/>
</dbReference>
<dbReference type="PROSITE" id="PS00301">
    <property type="entry name" value="G_TR_1"/>
    <property type="match status" value="1"/>
</dbReference>
<dbReference type="PROSITE" id="PS51722">
    <property type="entry name" value="G_TR_2"/>
    <property type="match status" value="1"/>
</dbReference>
<accession>P9WK97</accession>
<accession>L0T9Q5</accession>
<accession>P65269</accession>
<accession>P71739</accession>
<keyword id="KW-1003">Cell membrane</keyword>
<keyword id="KW-0342">GTP-binding</keyword>
<keyword id="KW-0378">Hydrolase</keyword>
<keyword id="KW-0472">Membrane</keyword>
<keyword id="KW-0547">Nucleotide-binding</keyword>
<keyword id="KW-0648">Protein biosynthesis</keyword>
<keyword id="KW-1185">Reference proteome</keyword>
<reference key="1">
    <citation type="journal article" date="1998" name="Nature">
        <title>Deciphering the biology of Mycobacterium tuberculosis from the complete genome sequence.</title>
        <authorList>
            <person name="Cole S.T."/>
            <person name="Brosch R."/>
            <person name="Parkhill J."/>
            <person name="Garnier T."/>
            <person name="Churcher C.M."/>
            <person name="Harris D.E."/>
            <person name="Gordon S.V."/>
            <person name="Eiglmeier K."/>
            <person name="Gas S."/>
            <person name="Barry C.E. III"/>
            <person name="Tekaia F."/>
            <person name="Badcock K."/>
            <person name="Basham D."/>
            <person name="Brown D."/>
            <person name="Chillingworth T."/>
            <person name="Connor R."/>
            <person name="Davies R.M."/>
            <person name="Devlin K."/>
            <person name="Feltwell T."/>
            <person name="Gentles S."/>
            <person name="Hamlin N."/>
            <person name="Holroyd S."/>
            <person name="Hornsby T."/>
            <person name="Jagels K."/>
            <person name="Krogh A."/>
            <person name="McLean J."/>
            <person name="Moule S."/>
            <person name="Murphy L.D."/>
            <person name="Oliver S."/>
            <person name="Osborne J."/>
            <person name="Quail M.A."/>
            <person name="Rajandream M.A."/>
            <person name="Rogers J."/>
            <person name="Rutter S."/>
            <person name="Seeger K."/>
            <person name="Skelton S."/>
            <person name="Squares S."/>
            <person name="Squares R."/>
            <person name="Sulston J.E."/>
            <person name="Taylor K."/>
            <person name="Whitehead S."/>
            <person name="Barrell B.G."/>
        </authorList>
    </citation>
    <scope>NUCLEOTIDE SEQUENCE [LARGE SCALE GENOMIC DNA]</scope>
    <source>
        <strain>ATCC 25618 / H37Rv</strain>
    </source>
</reference>
<reference key="2">
    <citation type="journal article" date="2008" name="Enzyme Microb. Technol.">
        <title>Cloning and characterization of GTP-binding proteins of Mycobacterium tuberculosis H37Rv.</title>
        <authorList>
            <person name="Meena L.S."/>
            <person name="Chopra P."/>
            <person name="Bedwal R.S."/>
            <person name="Singh Y."/>
        </authorList>
    </citation>
    <scope>FUNCTION AS A GTPASE</scope>
    <scope>GTP-BINDING</scope>
    <source>
        <strain>H37Rv</strain>
    </source>
</reference>
<reference key="3">
    <citation type="journal article" date="2011" name="Mol. Cell. Proteomics">
        <title>Proteogenomic analysis of Mycobacterium tuberculosis by high resolution mass spectrometry.</title>
        <authorList>
            <person name="Kelkar D.S."/>
            <person name="Kumar D."/>
            <person name="Kumar P."/>
            <person name="Balakrishnan L."/>
            <person name="Muthusamy B."/>
            <person name="Yadav A.K."/>
            <person name="Shrivastava P."/>
            <person name="Marimuthu A."/>
            <person name="Anand S."/>
            <person name="Sundaram H."/>
            <person name="Kingsbury R."/>
            <person name="Harsha H.C."/>
            <person name="Nair B."/>
            <person name="Prasad T.S."/>
            <person name="Chauhan D.S."/>
            <person name="Katoch K."/>
            <person name="Katoch V.M."/>
            <person name="Kumar P."/>
            <person name="Chaerkady R."/>
            <person name="Ramachandran S."/>
            <person name="Dash D."/>
            <person name="Pandey A."/>
        </authorList>
    </citation>
    <scope>IDENTIFICATION BY MASS SPECTROMETRY [LARGE SCALE ANALYSIS]</scope>
    <source>
        <strain>ATCC 25618 / H37Rv</strain>
    </source>
</reference>
<protein>
    <recommendedName>
        <fullName evidence="1">Elongation factor 4</fullName>
        <shortName evidence="1">EF-4</shortName>
        <ecNumber evidence="1">3.6.5.n1</ecNumber>
    </recommendedName>
    <alternativeName>
        <fullName evidence="1">Ribosomal back-translocase LepA</fullName>
    </alternativeName>
</protein>
<proteinExistence type="evidence at protein level"/>
<feature type="chain" id="PRO_0000176307" description="Elongation factor 4">
    <location>
        <begin position="1"/>
        <end position="653"/>
    </location>
</feature>
<feature type="domain" description="tr-type G">
    <location>
        <begin position="50"/>
        <end position="231"/>
    </location>
</feature>
<feature type="region of interest" description="Disordered" evidence="2">
    <location>
        <begin position="1"/>
        <end position="30"/>
    </location>
</feature>
<feature type="binding site" evidence="1">
    <location>
        <begin position="62"/>
        <end position="67"/>
    </location>
    <ligand>
        <name>GTP</name>
        <dbReference type="ChEBI" id="CHEBI:37565"/>
    </ligand>
</feature>
<feature type="binding site" evidence="1">
    <location>
        <begin position="178"/>
        <end position="181"/>
    </location>
    <ligand>
        <name>GTP</name>
        <dbReference type="ChEBI" id="CHEBI:37565"/>
    </ligand>
</feature>